<accession>P0A523</accession>
<accession>A0A1R3Y4M1</accession>
<accession>O06286</accession>
<accession>X2BNQ0</accession>
<keyword id="KW-0067">ATP-binding</keyword>
<keyword id="KW-0143">Chaperone</keyword>
<keyword id="KW-0547">Nucleotide-binding</keyword>
<keyword id="KW-1185">Reference proteome</keyword>
<keyword id="KW-0677">Repeat</keyword>
<gene>
    <name type="primary">clpC</name>
    <name type="ordered locus">BQ2027_MB3627C</name>
</gene>
<organism>
    <name type="scientific">Mycobacterium bovis (strain ATCC BAA-935 / AF2122/97)</name>
    <dbReference type="NCBI Taxonomy" id="233413"/>
    <lineage>
        <taxon>Bacteria</taxon>
        <taxon>Bacillati</taxon>
        <taxon>Actinomycetota</taxon>
        <taxon>Actinomycetes</taxon>
        <taxon>Mycobacteriales</taxon>
        <taxon>Mycobacteriaceae</taxon>
        <taxon>Mycobacterium</taxon>
        <taxon>Mycobacterium tuberculosis complex</taxon>
    </lineage>
</organism>
<comment type="similarity">
    <text evidence="5">Belongs to the ClpA/ClpB family. ClpC subfamily.</text>
</comment>
<protein>
    <recommendedName>
        <fullName>Probable ATP-dependent Clp protease ATP-binding subunit</fullName>
    </recommendedName>
</protein>
<name>CLPC_MYCBO</name>
<feature type="chain" id="PRO_0000191234" description="Probable ATP-dependent Clp protease ATP-binding subunit">
    <location>
        <begin position="1"/>
        <end position="848"/>
    </location>
</feature>
<feature type="domain" description="Clp R" evidence="3">
    <location>
        <begin position="2"/>
        <end position="144"/>
    </location>
</feature>
<feature type="domain" description="UVR" evidence="2">
    <location>
        <begin position="425"/>
        <end position="460"/>
    </location>
</feature>
<feature type="region of interest" description="Repeat 1" evidence="3">
    <location>
        <begin position="5"/>
        <end position="70"/>
    </location>
</feature>
<feature type="region of interest" description="Repeat 2" evidence="3">
    <location>
        <begin position="80"/>
        <end position="144"/>
    </location>
</feature>
<feature type="region of interest" description="I">
    <location>
        <begin position="171"/>
        <end position="418"/>
    </location>
</feature>
<feature type="region of interest" description="II">
    <location>
        <begin position="479"/>
        <end position="670"/>
    </location>
</feature>
<feature type="region of interest" description="Disordered" evidence="4">
    <location>
        <begin position="821"/>
        <end position="848"/>
    </location>
</feature>
<feature type="binding site" evidence="1">
    <location>
        <begin position="216"/>
        <end position="223"/>
    </location>
    <ligand>
        <name>ATP</name>
        <dbReference type="ChEBI" id="CHEBI:30616"/>
    </ligand>
</feature>
<feature type="binding site" evidence="1">
    <location>
        <begin position="553"/>
        <end position="560"/>
    </location>
    <ligand>
        <name>ATP</name>
        <dbReference type="ChEBI" id="CHEBI:30616"/>
    </ligand>
</feature>
<sequence length="848" mass="93552">MFERFTDRARRVVVLAQEEARMLNHNYIGTEHILLGLIHEGEGVAAKSLESLGISLEGVRSQVEEIIGQGQQAPSGHIPFTPRAKKVLELSLREALQLGHNYIGTEHILLGLIREGEGVAAQVLVKLGAELTRVRQQVIQLLSGYQGKEAAEAGTGGRGGESGSPSTSLVLDQFGRNLTAAAMEGKLDPVIGREKEIERVMQVLSRRTKNNPVLIGEPGVGKTAVVEGLAQAIVHGEVPETLKDKQLYTLDLGSLVAGSRYRGDFEERLKKVLKEINTRGDIILFIDELHTLVGAGAAEGAIDAASILKPKLARGELQTIGATTLDEYRKYIEKDAALERRFQPVQVGEPTVEHTIEILKGLRDRYEAHHRVSITDAAMVAAATLADRYINDRFLPDKAIDLIDEAGARMRIRRMTAPPDLREFDEKIAEARREKESAIDAQDFEKAASLRDREKTLVAQRAEREKQWRSGDLDVVAEVDDEQIAEVLGNWTGIPVFKLTEAETTRLLRMEEELHKRIIGQEDAVKAVSKAIRRTRAGLKDPKRPSGSFIFAGPSGVGKTELSKALANFLFGDDDALIQIDMGEFHDRFTASRLFGAPPGYVGYEEGGQLTEKVRRKPFSVVLFDEIEKAHQEIYNSLLQVLEDGRLTDGQGRTVDFKNTVLIFTSNLGTSDISKPVGLGFSKGGGENDYERMKQKVNDELKKHFRPEFLNRIDDIIVFHQLTREEIIRMVDLMISRVAGQLKSKDMALVLTDAAKALLAKRGFDPVLGARPLRRTIQREIEDQLSEKILFEEVGPGQVVTVDVDNWDGEGPGEDAVFTFTGTRKPPAEPDLAKAGAHSAGGPEPAAR</sequence>
<reference key="1">
    <citation type="journal article" date="2003" name="Proc. Natl. Acad. Sci. U.S.A.">
        <title>The complete genome sequence of Mycobacterium bovis.</title>
        <authorList>
            <person name="Garnier T."/>
            <person name="Eiglmeier K."/>
            <person name="Camus J.-C."/>
            <person name="Medina N."/>
            <person name="Mansoor H."/>
            <person name="Pryor M."/>
            <person name="Duthoy S."/>
            <person name="Grondin S."/>
            <person name="Lacroix C."/>
            <person name="Monsempe C."/>
            <person name="Simon S."/>
            <person name="Harris B."/>
            <person name="Atkin R."/>
            <person name="Doggett J."/>
            <person name="Mayes R."/>
            <person name="Keating L."/>
            <person name="Wheeler P.R."/>
            <person name="Parkhill J."/>
            <person name="Barrell B.G."/>
            <person name="Cole S.T."/>
            <person name="Gordon S.V."/>
            <person name="Hewinson R.G."/>
        </authorList>
    </citation>
    <scope>NUCLEOTIDE SEQUENCE [LARGE SCALE GENOMIC DNA]</scope>
    <source>
        <strain>ATCC BAA-935 / AF2122/97</strain>
    </source>
</reference>
<reference key="2">
    <citation type="journal article" date="2017" name="Genome Announc.">
        <title>Updated reference genome sequence and annotation of Mycobacterium bovis AF2122/97.</title>
        <authorList>
            <person name="Malone K.M."/>
            <person name="Farrell D."/>
            <person name="Stuber T.P."/>
            <person name="Schubert O.T."/>
            <person name="Aebersold R."/>
            <person name="Robbe-Austerman S."/>
            <person name="Gordon S.V."/>
        </authorList>
    </citation>
    <scope>NUCLEOTIDE SEQUENCE [LARGE SCALE GENOMIC DNA]</scope>
    <scope>GENOME REANNOTATION</scope>
    <source>
        <strain>ATCC BAA-935 / AF2122/97</strain>
    </source>
</reference>
<evidence type="ECO:0000255" key="1"/>
<evidence type="ECO:0000255" key="2">
    <source>
        <dbReference type="PROSITE-ProRule" id="PRU00217"/>
    </source>
</evidence>
<evidence type="ECO:0000255" key="3">
    <source>
        <dbReference type="PROSITE-ProRule" id="PRU01251"/>
    </source>
</evidence>
<evidence type="ECO:0000256" key="4">
    <source>
        <dbReference type="SAM" id="MobiDB-lite"/>
    </source>
</evidence>
<evidence type="ECO:0000305" key="5"/>
<proteinExistence type="inferred from homology"/>
<dbReference type="EMBL" id="LT708304">
    <property type="protein sequence ID" value="SIU02254.1"/>
    <property type="molecule type" value="Genomic_DNA"/>
</dbReference>
<dbReference type="RefSeq" id="NP_857266.1">
    <property type="nucleotide sequence ID" value="NC_002945.3"/>
</dbReference>
<dbReference type="SMR" id="P0A523"/>
<dbReference type="KEGG" id="mbo:BQ2027_MB3627C"/>
<dbReference type="PATRIC" id="fig|233413.5.peg.3973"/>
<dbReference type="Proteomes" id="UP000001419">
    <property type="component" value="Chromosome"/>
</dbReference>
<dbReference type="GO" id="GO:0005737">
    <property type="term" value="C:cytoplasm"/>
    <property type="evidence" value="ECO:0007669"/>
    <property type="project" value="TreeGrafter"/>
</dbReference>
<dbReference type="GO" id="GO:0005524">
    <property type="term" value="F:ATP binding"/>
    <property type="evidence" value="ECO:0007669"/>
    <property type="project" value="UniProtKB-KW"/>
</dbReference>
<dbReference type="GO" id="GO:0016887">
    <property type="term" value="F:ATP hydrolysis activity"/>
    <property type="evidence" value="ECO:0007669"/>
    <property type="project" value="InterPro"/>
</dbReference>
<dbReference type="GO" id="GO:0034605">
    <property type="term" value="P:cellular response to heat"/>
    <property type="evidence" value="ECO:0007669"/>
    <property type="project" value="TreeGrafter"/>
</dbReference>
<dbReference type="CDD" id="cd00009">
    <property type="entry name" value="AAA"/>
    <property type="match status" value="1"/>
</dbReference>
<dbReference type="CDD" id="cd19499">
    <property type="entry name" value="RecA-like_ClpB_Hsp104-like"/>
    <property type="match status" value="1"/>
</dbReference>
<dbReference type="FunFam" id="1.10.8.60:FF:000017">
    <property type="entry name" value="ATP-dependent chaperone ClpB"/>
    <property type="match status" value="1"/>
</dbReference>
<dbReference type="FunFam" id="1.10.1780.10:FF:000001">
    <property type="entry name" value="ATP-dependent Clp protease ATP-binding subunit"/>
    <property type="match status" value="1"/>
</dbReference>
<dbReference type="FunFam" id="1.10.8.60:FF:000011">
    <property type="entry name" value="ATP-dependent Clp protease ATP-binding subunit"/>
    <property type="match status" value="1"/>
</dbReference>
<dbReference type="FunFam" id="4.10.860.10:FF:000004">
    <property type="entry name" value="ATP-dependent Clp protease ATP-binding subunit"/>
    <property type="match status" value="1"/>
</dbReference>
<dbReference type="FunFam" id="3.40.50.300:FF:000025">
    <property type="entry name" value="ATP-dependent Clp protease subunit"/>
    <property type="match status" value="1"/>
</dbReference>
<dbReference type="FunFam" id="3.40.50.300:FF:000010">
    <property type="entry name" value="Chaperone clpB 1, putative"/>
    <property type="match status" value="1"/>
</dbReference>
<dbReference type="Gene3D" id="1.10.8.60">
    <property type="match status" value="2"/>
</dbReference>
<dbReference type="Gene3D" id="1.10.1780.10">
    <property type="entry name" value="Clp, N-terminal domain"/>
    <property type="match status" value="1"/>
</dbReference>
<dbReference type="Gene3D" id="3.40.50.300">
    <property type="entry name" value="P-loop containing nucleotide triphosphate hydrolases"/>
    <property type="match status" value="2"/>
</dbReference>
<dbReference type="Gene3D" id="4.10.860.10">
    <property type="entry name" value="UVR domain"/>
    <property type="match status" value="1"/>
</dbReference>
<dbReference type="InterPro" id="IPR003593">
    <property type="entry name" value="AAA+_ATPase"/>
</dbReference>
<dbReference type="InterPro" id="IPR003959">
    <property type="entry name" value="ATPase_AAA_core"/>
</dbReference>
<dbReference type="InterPro" id="IPR019489">
    <property type="entry name" value="Clp_ATPase_C"/>
</dbReference>
<dbReference type="InterPro" id="IPR036628">
    <property type="entry name" value="Clp_N_dom_sf"/>
</dbReference>
<dbReference type="InterPro" id="IPR004176">
    <property type="entry name" value="Clp_R_dom"/>
</dbReference>
<dbReference type="InterPro" id="IPR001270">
    <property type="entry name" value="ClpA/B"/>
</dbReference>
<dbReference type="InterPro" id="IPR018368">
    <property type="entry name" value="ClpA/B_CS1"/>
</dbReference>
<dbReference type="InterPro" id="IPR041546">
    <property type="entry name" value="ClpA/ClpB_AAA_lid"/>
</dbReference>
<dbReference type="InterPro" id="IPR050130">
    <property type="entry name" value="ClpA_ClpB"/>
</dbReference>
<dbReference type="InterPro" id="IPR027417">
    <property type="entry name" value="P-loop_NTPase"/>
</dbReference>
<dbReference type="InterPro" id="IPR001943">
    <property type="entry name" value="UVR_dom"/>
</dbReference>
<dbReference type="PANTHER" id="PTHR11638">
    <property type="entry name" value="ATP-DEPENDENT CLP PROTEASE"/>
    <property type="match status" value="1"/>
</dbReference>
<dbReference type="PANTHER" id="PTHR11638:SF18">
    <property type="entry name" value="HEAT SHOCK PROTEIN 104"/>
    <property type="match status" value="1"/>
</dbReference>
<dbReference type="Pfam" id="PF00004">
    <property type="entry name" value="AAA"/>
    <property type="match status" value="1"/>
</dbReference>
<dbReference type="Pfam" id="PF07724">
    <property type="entry name" value="AAA_2"/>
    <property type="match status" value="1"/>
</dbReference>
<dbReference type="Pfam" id="PF17871">
    <property type="entry name" value="AAA_lid_9"/>
    <property type="match status" value="1"/>
</dbReference>
<dbReference type="Pfam" id="PF02861">
    <property type="entry name" value="Clp_N"/>
    <property type="match status" value="2"/>
</dbReference>
<dbReference type="Pfam" id="PF10431">
    <property type="entry name" value="ClpB_D2-small"/>
    <property type="match status" value="1"/>
</dbReference>
<dbReference type="PRINTS" id="PR00300">
    <property type="entry name" value="CLPPROTEASEA"/>
</dbReference>
<dbReference type="SMART" id="SM00382">
    <property type="entry name" value="AAA"/>
    <property type="match status" value="2"/>
</dbReference>
<dbReference type="SMART" id="SM01086">
    <property type="entry name" value="ClpB_D2-small"/>
    <property type="match status" value="1"/>
</dbReference>
<dbReference type="SUPFAM" id="SSF81923">
    <property type="entry name" value="Double Clp-N motif"/>
    <property type="match status" value="1"/>
</dbReference>
<dbReference type="SUPFAM" id="SSF52540">
    <property type="entry name" value="P-loop containing nucleoside triphosphate hydrolases"/>
    <property type="match status" value="2"/>
</dbReference>
<dbReference type="PROSITE" id="PS51903">
    <property type="entry name" value="CLP_R"/>
    <property type="match status" value="1"/>
</dbReference>
<dbReference type="PROSITE" id="PS00870">
    <property type="entry name" value="CLPAB_1"/>
    <property type="match status" value="1"/>
</dbReference>
<dbReference type="PROSITE" id="PS50151">
    <property type="entry name" value="UVR"/>
    <property type="match status" value="1"/>
</dbReference>